<comment type="function">
    <text evidence="1">Binds together with bS18 to 16S ribosomal RNA.</text>
</comment>
<comment type="similarity">
    <text evidence="1">Belongs to the bacterial ribosomal protein bS6 family.</text>
</comment>
<dbReference type="EMBL" id="CP000911">
    <property type="protein sequence ID" value="ABY37569.1"/>
    <property type="molecule type" value="Genomic_DNA"/>
</dbReference>
<dbReference type="RefSeq" id="WP_006072256.1">
    <property type="nucleotide sequence ID" value="NC_010169.1"/>
</dbReference>
<dbReference type="SMR" id="B0CKD9"/>
<dbReference type="KEGG" id="bmt:BSUIS_A0481"/>
<dbReference type="HOGENOM" id="CLU_113441_2_0_5"/>
<dbReference type="Proteomes" id="UP000008545">
    <property type="component" value="Chromosome I"/>
</dbReference>
<dbReference type="GO" id="GO:0022627">
    <property type="term" value="C:cytosolic small ribosomal subunit"/>
    <property type="evidence" value="ECO:0007669"/>
    <property type="project" value="TreeGrafter"/>
</dbReference>
<dbReference type="GO" id="GO:0070181">
    <property type="term" value="F:small ribosomal subunit rRNA binding"/>
    <property type="evidence" value="ECO:0007669"/>
    <property type="project" value="TreeGrafter"/>
</dbReference>
<dbReference type="GO" id="GO:0003735">
    <property type="term" value="F:structural constituent of ribosome"/>
    <property type="evidence" value="ECO:0007669"/>
    <property type="project" value="InterPro"/>
</dbReference>
<dbReference type="GO" id="GO:0006412">
    <property type="term" value="P:translation"/>
    <property type="evidence" value="ECO:0007669"/>
    <property type="project" value="UniProtKB-UniRule"/>
</dbReference>
<dbReference type="CDD" id="cd00473">
    <property type="entry name" value="bS6"/>
    <property type="match status" value="1"/>
</dbReference>
<dbReference type="Gene3D" id="3.30.70.60">
    <property type="match status" value="1"/>
</dbReference>
<dbReference type="HAMAP" id="MF_00360">
    <property type="entry name" value="Ribosomal_bS6"/>
    <property type="match status" value="1"/>
</dbReference>
<dbReference type="InterPro" id="IPR000529">
    <property type="entry name" value="Ribosomal_bS6"/>
</dbReference>
<dbReference type="InterPro" id="IPR035980">
    <property type="entry name" value="Ribosomal_bS6_sf"/>
</dbReference>
<dbReference type="InterPro" id="IPR020814">
    <property type="entry name" value="Ribosomal_S6_plastid/chlpt"/>
</dbReference>
<dbReference type="InterPro" id="IPR014717">
    <property type="entry name" value="Transl_elong_EF1B/ribsomal_bS6"/>
</dbReference>
<dbReference type="NCBIfam" id="TIGR00166">
    <property type="entry name" value="S6"/>
    <property type="match status" value="1"/>
</dbReference>
<dbReference type="PANTHER" id="PTHR21011">
    <property type="entry name" value="MITOCHONDRIAL 28S RIBOSOMAL PROTEIN S6"/>
    <property type="match status" value="1"/>
</dbReference>
<dbReference type="PANTHER" id="PTHR21011:SF1">
    <property type="entry name" value="SMALL RIBOSOMAL SUBUNIT PROTEIN BS6M"/>
    <property type="match status" value="1"/>
</dbReference>
<dbReference type="Pfam" id="PF01250">
    <property type="entry name" value="Ribosomal_S6"/>
    <property type="match status" value="1"/>
</dbReference>
<dbReference type="SUPFAM" id="SSF54995">
    <property type="entry name" value="Ribosomal protein S6"/>
    <property type="match status" value="1"/>
</dbReference>
<protein>
    <recommendedName>
        <fullName evidence="1">Small ribosomal subunit protein bS6</fullName>
    </recommendedName>
    <alternativeName>
        <fullName evidence="3">30S ribosomal protein S6</fullName>
    </alternativeName>
</protein>
<proteinExistence type="inferred from homology"/>
<evidence type="ECO:0000255" key="1">
    <source>
        <dbReference type="HAMAP-Rule" id="MF_00360"/>
    </source>
</evidence>
<evidence type="ECO:0000256" key="2">
    <source>
        <dbReference type="SAM" id="MobiDB-lite"/>
    </source>
</evidence>
<evidence type="ECO:0000305" key="3"/>
<sequence length="148" mass="17126">MALYEHVLLARQDISQQQVDALVEQFKGVLEANGGKFGKVENWGLRPLTYRIKKNRKAYYTLVNIDAPAAAVAEMERQMRINEDVLRFLTVRVEEHEEGQSAMLTRRDDRRERDGDDRPRRREGGFDRGDRGDRSPRRPRDNEAGEGA</sequence>
<organism>
    <name type="scientific">Brucella suis (strain ATCC 23445 / NCTC 10510)</name>
    <dbReference type="NCBI Taxonomy" id="470137"/>
    <lineage>
        <taxon>Bacteria</taxon>
        <taxon>Pseudomonadati</taxon>
        <taxon>Pseudomonadota</taxon>
        <taxon>Alphaproteobacteria</taxon>
        <taxon>Hyphomicrobiales</taxon>
        <taxon>Brucellaceae</taxon>
        <taxon>Brucella/Ochrobactrum group</taxon>
        <taxon>Brucella</taxon>
    </lineage>
</organism>
<gene>
    <name evidence="1" type="primary">rpsF</name>
    <name type="ordered locus">BSUIS_A0481</name>
</gene>
<keyword id="KW-0687">Ribonucleoprotein</keyword>
<keyword id="KW-0689">Ribosomal protein</keyword>
<keyword id="KW-0694">RNA-binding</keyword>
<keyword id="KW-0699">rRNA-binding</keyword>
<reference key="1">
    <citation type="submission" date="2007-12" db="EMBL/GenBank/DDBJ databases">
        <title>Brucella suis ATCC 23445 whole genome shotgun sequencing project.</title>
        <authorList>
            <person name="Setubal J.C."/>
            <person name="Bowns C."/>
            <person name="Boyle S."/>
            <person name="Crasta O.R."/>
            <person name="Czar M.J."/>
            <person name="Dharmanolla C."/>
            <person name="Gillespie J.J."/>
            <person name="Kenyon R.W."/>
            <person name="Lu J."/>
            <person name="Mane S."/>
            <person name="Mohapatra S."/>
            <person name="Nagrani S."/>
            <person name="Purkayastha A."/>
            <person name="Rajasimha H.K."/>
            <person name="Shallom J.M."/>
            <person name="Shallom S."/>
            <person name="Shukla M."/>
            <person name="Snyder E.E."/>
            <person name="Sobral B.W."/>
            <person name="Wattam A.R."/>
            <person name="Will R."/>
            <person name="Williams K."/>
            <person name="Yoo H."/>
            <person name="Bruce D."/>
            <person name="Detter C."/>
            <person name="Munk C."/>
            <person name="Brettin T.S."/>
        </authorList>
    </citation>
    <scope>NUCLEOTIDE SEQUENCE [LARGE SCALE GENOMIC DNA]</scope>
    <source>
        <strain>ATCC 23445 / NCTC 10510</strain>
    </source>
</reference>
<accession>B0CKD9</accession>
<name>RS6_BRUSI</name>
<feature type="chain" id="PRO_1000079435" description="Small ribosomal subunit protein bS6">
    <location>
        <begin position="1"/>
        <end position="148"/>
    </location>
</feature>
<feature type="region of interest" description="Disordered" evidence="2">
    <location>
        <begin position="96"/>
        <end position="148"/>
    </location>
</feature>